<dbReference type="EMBL" id="AE016853">
    <property type="protein sequence ID" value="AAO54505.1"/>
    <property type="molecule type" value="Genomic_DNA"/>
</dbReference>
<dbReference type="RefSeq" id="NP_790810.1">
    <property type="nucleotide sequence ID" value="NC_004578.1"/>
</dbReference>
<dbReference type="RefSeq" id="WP_011103372.1">
    <property type="nucleotide sequence ID" value="NC_004578.1"/>
</dbReference>
<dbReference type="SMR" id="Q888P6"/>
<dbReference type="STRING" id="223283.PSPTO_0971"/>
<dbReference type="GeneID" id="1182600"/>
<dbReference type="KEGG" id="pst:PSPTO_0971"/>
<dbReference type="PATRIC" id="fig|223283.9.peg.981"/>
<dbReference type="eggNOG" id="COG1489">
    <property type="taxonomic scope" value="Bacteria"/>
</dbReference>
<dbReference type="HOGENOM" id="CLU_052299_2_0_6"/>
<dbReference type="OrthoDB" id="9802365at2"/>
<dbReference type="PhylomeDB" id="Q888P6"/>
<dbReference type="Proteomes" id="UP000002515">
    <property type="component" value="Chromosome"/>
</dbReference>
<dbReference type="GO" id="GO:0003677">
    <property type="term" value="F:DNA binding"/>
    <property type="evidence" value="ECO:0007669"/>
    <property type="project" value="InterPro"/>
</dbReference>
<dbReference type="CDD" id="cd22359">
    <property type="entry name" value="SfsA-like_bacterial"/>
    <property type="match status" value="1"/>
</dbReference>
<dbReference type="FunFam" id="2.40.50.580:FF:000001">
    <property type="entry name" value="Sugar fermentation stimulation protein A"/>
    <property type="match status" value="1"/>
</dbReference>
<dbReference type="Gene3D" id="2.40.50.580">
    <property type="match status" value="1"/>
</dbReference>
<dbReference type="Gene3D" id="3.40.1350.60">
    <property type="match status" value="1"/>
</dbReference>
<dbReference type="HAMAP" id="MF_00095">
    <property type="entry name" value="SfsA"/>
    <property type="match status" value="1"/>
</dbReference>
<dbReference type="InterPro" id="IPR005224">
    <property type="entry name" value="SfsA"/>
</dbReference>
<dbReference type="InterPro" id="IPR040452">
    <property type="entry name" value="SfsA_C"/>
</dbReference>
<dbReference type="InterPro" id="IPR041465">
    <property type="entry name" value="SfsA_N"/>
</dbReference>
<dbReference type="NCBIfam" id="TIGR00230">
    <property type="entry name" value="sfsA"/>
    <property type="match status" value="1"/>
</dbReference>
<dbReference type="PANTHER" id="PTHR30545">
    <property type="entry name" value="SUGAR FERMENTATION STIMULATION PROTEIN A"/>
    <property type="match status" value="1"/>
</dbReference>
<dbReference type="PANTHER" id="PTHR30545:SF2">
    <property type="entry name" value="SUGAR FERMENTATION STIMULATION PROTEIN A"/>
    <property type="match status" value="1"/>
</dbReference>
<dbReference type="Pfam" id="PF03749">
    <property type="entry name" value="SfsA"/>
    <property type="match status" value="1"/>
</dbReference>
<dbReference type="Pfam" id="PF17746">
    <property type="entry name" value="SfsA_N"/>
    <property type="match status" value="1"/>
</dbReference>
<organism>
    <name type="scientific">Pseudomonas syringae pv. tomato (strain ATCC BAA-871 / DC3000)</name>
    <dbReference type="NCBI Taxonomy" id="223283"/>
    <lineage>
        <taxon>Bacteria</taxon>
        <taxon>Pseudomonadati</taxon>
        <taxon>Pseudomonadota</taxon>
        <taxon>Gammaproteobacteria</taxon>
        <taxon>Pseudomonadales</taxon>
        <taxon>Pseudomonadaceae</taxon>
        <taxon>Pseudomonas</taxon>
    </lineage>
</organism>
<name>SFSA_PSESM</name>
<proteinExistence type="inferred from homology"/>
<sequence>MRFSPELEQGRLLVRYKRFLADIETDSGELLTIHCPNTGSMLNCMMPGGRVWFSRSNDPKRKLPGTWEISETPQGRLACINTGRANTLVEEALRAGVIRELEGFTALKREVAYGQEKSRVDFRLEYPDGYLYLEVKSVTLGFADSAVAAFPDAVTQRGARHLRELATLAREGVRAVLLYCVNLTGIEAVRPAKEIDPAYAAALREAVDAGVQILAYGVQLTPEAVYIDRHLEVHWPD</sequence>
<accession>Q888P6</accession>
<protein>
    <recommendedName>
        <fullName evidence="1">Sugar fermentation stimulation protein homolog</fullName>
    </recommendedName>
</protein>
<comment type="similarity">
    <text evidence="1">Belongs to the SfsA family.</text>
</comment>
<reference key="1">
    <citation type="journal article" date="2003" name="Proc. Natl. Acad. Sci. U.S.A.">
        <title>The complete genome sequence of the Arabidopsis and tomato pathogen Pseudomonas syringae pv. tomato DC3000.</title>
        <authorList>
            <person name="Buell C.R."/>
            <person name="Joardar V."/>
            <person name="Lindeberg M."/>
            <person name="Selengut J."/>
            <person name="Paulsen I.T."/>
            <person name="Gwinn M.L."/>
            <person name="Dodson R.J."/>
            <person name="DeBoy R.T."/>
            <person name="Durkin A.S."/>
            <person name="Kolonay J.F."/>
            <person name="Madupu R."/>
            <person name="Daugherty S.C."/>
            <person name="Brinkac L.M."/>
            <person name="Beanan M.J."/>
            <person name="Haft D.H."/>
            <person name="Nelson W.C."/>
            <person name="Davidsen T.M."/>
            <person name="Zafar N."/>
            <person name="Zhou L."/>
            <person name="Liu J."/>
            <person name="Yuan Q."/>
            <person name="Khouri H.M."/>
            <person name="Fedorova N.B."/>
            <person name="Tran B."/>
            <person name="Russell D."/>
            <person name="Berry K.J."/>
            <person name="Utterback T.R."/>
            <person name="Van Aken S.E."/>
            <person name="Feldblyum T.V."/>
            <person name="D'Ascenzo M."/>
            <person name="Deng W.-L."/>
            <person name="Ramos A.R."/>
            <person name="Alfano J.R."/>
            <person name="Cartinhour S."/>
            <person name="Chatterjee A.K."/>
            <person name="Delaney T.P."/>
            <person name="Lazarowitz S.G."/>
            <person name="Martin G.B."/>
            <person name="Schneider D.J."/>
            <person name="Tang X."/>
            <person name="Bender C.L."/>
            <person name="White O."/>
            <person name="Fraser C.M."/>
            <person name="Collmer A."/>
        </authorList>
    </citation>
    <scope>NUCLEOTIDE SEQUENCE [LARGE SCALE GENOMIC DNA]</scope>
    <source>
        <strain>ATCC BAA-871 / DC3000</strain>
    </source>
</reference>
<gene>
    <name evidence="1" type="primary">sfsA</name>
    <name type="ordered locus">PSPTO_0971</name>
</gene>
<evidence type="ECO:0000255" key="1">
    <source>
        <dbReference type="HAMAP-Rule" id="MF_00095"/>
    </source>
</evidence>
<feature type="chain" id="PRO_0000152300" description="Sugar fermentation stimulation protein homolog">
    <location>
        <begin position="1"/>
        <end position="237"/>
    </location>
</feature>
<keyword id="KW-1185">Reference proteome</keyword>